<gene>
    <name evidence="1" type="primary">tmaR</name>
    <name type="ordered locus">YpsIP31758_2417</name>
</gene>
<comment type="function">
    <text evidence="1">Pole-localizer protein involved in the regulation of several cellular processes.</text>
</comment>
<comment type="subcellular location">
    <subcellularLocation>
        <location evidence="1">Cytoplasm</location>
    </subcellularLocation>
</comment>
<comment type="similarity">
    <text evidence="1">Belongs to the pole-localizer TmaR family.</text>
</comment>
<accession>A7FJF8</accession>
<protein>
    <recommendedName>
        <fullName evidence="1">Pole-localizer protein TmaR</fullName>
    </recommendedName>
</protein>
<sequence length="105" mass="12461">MDNASKPTFQDVLEFVRMFRRKNKLQREIVDNEKKIRDNQKRVLLLDNLSEYIKPGMSIEEVQAIIANMRGDYEDRVDDYIIKNADLSKERRELSKKLKAMGEVK</sequence>
<organism>
    <name type="scientific">Yersinia pseudotuberculosis serotype O:1b (strain IP 31758)</name>
    <dbReference type="NCBI Taxonomy" id="349747"/>
    <lineage>
        <taxon>Bacteria</taxon>
        <taxon>Pseudomonadati</taxon>
        <taxon>Pseudomonadota</taxon>
        <taxon>Gammaproteobacteria</taxon>
        <taxon>Enterobacterales</taxon>
        <taxon>Yersiniaceae</taxon>
        <taxon>Yersinia</taxon>
    </lineage>
</organism>
<proteinExistence type="inferred from homology"/>
<feature type="chain" id="PRO_1000061981" description="Pole-localizer protein TmaR">
    <location>
        <begin position="1"/>
        <end position="105"/>
    </location>
</feature>
<feature type="coiled-coil region" evidence="1">
    <location>
        <begin position="22"/>
        <end position="42"/>
    </location>
</feature>
<feature type="coiled-coil region" evidence="1">
    <location>
        <begin position="77"/>
        <end position="104"/>
    </location>
</feature>
<keyword id="KW-0175">Coiled coil</keyword>
<keyword id="KW-0963">Cytoplasm</keyword>
<evidence type="ECO:0000255" key="1">
    <source>
        <dbReference type="HAMAP-Rule" id="MF_00683"/>
    </source>
</evidence>
<name>TMAR_YERP3</name>
<reference key="1">
    <citation type="journal article" date="2007" name="PLoS Genet.">
        <title>The complete genome sequence of Yersinia pseudotuberculosis IP31758, the causative agent of Far East scarlet-like fever.</title>
        <authorList>
            <person name="Eppinger M."/>
            <person name="Rosovitz M.J."/>
            <person name="Fricke W.F."/>
            <person name="Rasko D.A."/>
            <person name="Kokorina G."/>
            <person name="Fayolle C."/>
            <person name="Lindler L.E."/>
            <person name="Carniel E."/>
            <person name="Ravel J."/>
        </authorList>
    </citation>
    <scope>NUCLEOTIDE SEQUENCE [LARGE SCALE GENOMIC DNA]</scope>
    <source>
        <strain>IP 31758</strain>
    </source>
</reference>
<dbReference type="EMBL" id="CP000720">
    <property type="protein sequence ID" value="ABS46577.1"/>
    <property type="molecule type" value="Genomic_DNA"/>
</dbReference>
<dbReference type="SMR" id="A7FJF8"/>
<dbReference type="KEGG" id="ypi:YpsIP31758_2417"/>
<dbReference type="HOGENOM" id="CLU_153146_0_0_6"/>
<dbReference type="Proteomes" id="UP000002412">
    <property type="component" value="Chromosome"/>
</dbReference>
<dbReference type="GO" id="GO:0005829">
    <property type="term" value="C:cytosol"/>
    <property type="evidence" value="ECO:0007669"/>
    <property type="project" value="TreeGrafter"/>
</dbReference>
<dbReference type="HAMAP" id="MF_00683">
    <property type="entry name" value="Pole_loc_TmaR"/>
    <property type="match status" value="1"/>
</dbReference>
<dbReference type="InterPro" id="IPR007458">
    <property type="entry name" value="DUF496"/>
</dbReference>
<dbReference type="InterPro" id="IPR053375">
    <property type="entry name" value="UPF0265"/>
</dbReference>
<dbReference type="NCBIfam" id="NF003844">
    <property type="entry name" value="PRK05423.1"/>
    <property type="match status" value="1"/>
</dbReference>
<dbReference type="NCBIfam" id="NF040881">
    <property type="entry name" value="PTS_reg_TmaR"/>
    <property type="match status" value="1"/>
</dbReference>
<dbReference type="PANTHER" id="PTHR39591">
    <property type="entry name" value="UPF0265 PROTEIN YEEX"/>
    <property type="match status" value="1"/>
</dbReference>
<dbReference type="PANTHER" id="PTHR39591:SF1">
    <property type="entry name" value="UPF0265 PROTEIN YEEX"/>
    <property type="match status" value="1"/>
</dbReference>
<dbReference type="Pfam" id="PF04363">
    <property type="entry name" value="DUF496"/>
    <property type="match status" value="1"/>
</dbReference>
<dbReference type="PIRSF" id="PIRSF028773">
    <property type="entry name" value="UCP028773"/>
    <property type="match status" value="1"/>
</dbReference>